<name>APT_STRPI</name>
<keyword id="KW-0963">Cytoplasm</keyword>
<keyword id="KW-0328">Glycosyltransferase</keyword>
<keyword id="KW-0660">Purine salvage</keyword>
<keyword id="KW-0808">Transferase</keyword>
<gene>
    <name evidence="1" type="primary">apt</name>
    <name type="ordered locus">SPH_1691</name>
</gene>
<comment type="function">
    <text evidence="1">Catalyzes a salvage reaction resulting in the formation of AMP, that is energically less costly than de novo synthesis.</text>
</comment>
<comment type="catalytic activity">
    <reaction evidence="1">
        <text>AMP + diphosphate = 5-phospho-alpha-D-ribose 1-diphosphate + adenine</text>
        <dbReference type="Rhea" id="RHEA:16609"/>
        <dbReference type="ChEBI" id="CHEBI:16708"/>
        <dbReference type="ChEBI" id="CHEBI:33019"/>
        <dbReference type="ChEBI" id="CHEBI:58017"/>
        <dbReference type="ChEBI" id="CHEBI:456215"/>
        <dbReference type="EC" id="2.4.2.7"/>
    </reaction>
</comment>
<comment type="pathway">
    <text evidence="1">Purine metabolism; AMP biosynthesis via salvage pathway; AMP from adenine: step 1/1.</text>
</comment>
<comment type="subunit">
    <text evidence="1">Homodimer.</text>
</comment>
<comment type="subcellular location">
    <subcellularLocation>
        <location evidence="1">Cytoplasm</location>
    </subcellularLocation>
</comment>
<comment type="similarity">
    <text evidence="1">Belongs to the purine/pyrimidine phosphoribosyltransferase family.</text>
</comment>
<organism>
    <name type="scientific">Streptococcus pneumoniae (strain Hungary19A-6)</name>
    <dbReference type="NCBI Taxonomy" id="487214"/>
    <lineage>
        <taxon>Bacteria</taxon>
        <taxon>Bacillati</taxon>
        <taxon>Bacillota</taxon>
        <taxon>Bacilli</taxon>
        <taxon>Lactobacillales</taxon>
        <taxon>Streptococcaceae</taxon>
        <taxon>Streptococcus</taxon>
    </lineage>
</organism>
<sequence>MNLKDYIATIENYPKEGITFRDISPLMADGNAYSYAVREIVQYATDKKVDMIVGPEARGFIVGCPVAFELGIGFAPVRKPGKLPREVISADYEKEYGVDTLTMHADAIKPGQRVLIVDDLLATGGTVKATIEMIEKLGGVMAGCAFLVELDELNGREKIGDYDYKVLMHY</sequence>
<protein>
    <recommendedName>
        <fullName evidence="1">Adenine phosphoribosyltransferase</fullName>
        <shortName evidence="1">APRT</shortName>
        <ecNumber evidence="1">2.4.2.7</ecNumber>
    </recommendedName>
</protein>
<accession>B1ICZ7</accession>
<evidence type="ECO:0000255" key="1">
    <source>
        <dbReference type="HAMAP-Rule" id="MF_00004"/>
    </source>
</evidence>
<dbReference type="EC" id="2.4.2.7" evidence="1"/>
<dbReference type="EMBL" id="CP000936">
    <property type="protein sequence ID" value="ACA36445.1"/>
    <property type="molecule type" value="Genomic_DNA"/>
</dbReference>
<dbReference type="RefSeq" id="WP_001049323.1">
    <property type="nucleotide sequence ID" value="NC_010380.1"/>
</dbReference>
<dbReference type="SMR" id="B1ICZ7"/>
<dbReference type="KEGG" id="spv:SPH_1691"/>
<dbReference type="HOGENOM" id="CLU_063339_3_0_9"/>
<dbReference type="UniPathway" id="UPA00588">
    <property type="reaction ID" value="UER00646"/>
</dbReference>
<dbReference type="Proteomes" id="UP000002163">
    <property type="component" value="Chromosome"/>
</dbReference>
<dbReference type="GO" id="GO:0005737">
    <property type="term" value="C:cytoplasm"/>
    <property type="evidence" value="ECO:0007669"/>
    <property type="project" value="UniProtKB-SubCell"/>
</dbReference>
<dbReference type="GO" id="GO:0002055">
    <property type="term" value="F:adenine binding"/>
    <property type="evidence" value="ECO:0007669"/>
    <property type="project" value="TreeGrafter"/>
</dbReference>
<dbReference type="GO" id="GO:0003999">
    <property type="term" value="F:adenine phosphoribosyltransferase activity"/>
    <property type="evidence" value="ECO:0007669"/>
    <property type="project" value="UniProtKB-UniRule"/>
</dbReference>
<dbReference type="GO" id="GO:0016208">
    <property type="term" value="F:AMP binding"/>
    <property type="evidence" value="ECO:0007669"/>
    <property type="project" value="TreeGrafter"/>
</dbReference>
<dbReference type="GO" id="GO:0006168">
    <property type="term" value="P:adenine salvage"/>
    <property type="evidence" value="ECO:0007669"/>
    <property type="project" value="InterPro"/>
</dbReference>
<dbReference type="GO" id="GO:0044209">
    <property type="term" value="P:AMP salvage"/>
    <property type="evidence" value="ECO:0007669"/>
    <property type="project" value="UniProtKB-UniRule"/>
</dbReference>
<dbReference type="GO" id="GO:0006166">
    <property type="term" value="P:purine ribonucleoside salvage"/>
    <property type="evidence" value="ECO:0007669"/>
    <property type="project" value="UniProtKB-KW"/>
</dbReference>
<dbReference type="CDD" id="cd06223">
    <property type="entry name" value="PRTases_typeI"/>
    <property type="match status" value="1"/>
</dbReference>
<dbReference type="FunFam" id="3.40.50.2020:FF:000004">
    <property type="entry name" value="Adenine phosphoribosyltransferase"/>
    <property type="match status" value="1"/>
</dbReference>
<dbReference type="Gene3D" id="3.40.50.2020">
    <property type="match status" value="1"/>
</dbReference>
<dbReference type="HAMAP" id="MF_00004">
    <property type="entry name" value="Aden_phosphoribosyltr"/>
    <property type="match status" value="1"/>
</dbReference>
<dbReference type="InterPro" id="IPR005764">
    <property type="entry name" value="Ade_phspho_trans"/>
</dbReference>
<dbReference type="InterPro" id="IPR000836">
    <property type="entry name" value="PRibTrfase_dom"/>
</dbReference>
<dbReference type="InterPro" id="IPR029057">
    <property type="entry name" value="PRTase-like"/>
</dbReference>
<dbReference type="InterPro" id="IPR050054">
    <property type="entry name" value="UPRTase/APRTase"/>
</dbReference>
<dbReference type="NCBIfam" id="TIGR01090">
    <property type="entry name" value="apt"/>
    <property type="match status" value="1"/>
</dbReference>
<dbReference type="NCBIfam" id="NF002633">
    <property type="entry name" value="PRK02304.1-2"/>
    <property type="match status" value="1"/>
</dbReference>
<dbReference type="NCBIfam" id="NF002634">
    <property type="entry name" value="PRK02304.1-3"/>
    <property type="match status" value="1"/>
</dbReference>
<dbReference type="NCBIfam" id="NF002636">
    <property type="entry name" value="PRK02304.1-5"/>
    <property type="match status" value="1"/>
</dbReference>
<dbReference type="PANTHER" id="PTHR32315">
    <property type="entry name" value="ADENINE PHOSPHORIBOSYLTRANSFERASE"/>
    <property type="match status" value="1"/>
</dbReference>
<dbReference type="PANTHER" id="PTHR32315:SF3">
    <property type="entry name" value="ADENINE PHOSPHORIBOSYLTRANSFERASE"/>
    <property type="match status" value="1"/>
</dbReference>
<dbReference type="Pfam" id="PF00156">
    <property type="entry name" value="Pribosyltran"/>
    <property type="match status" value="1"/>
</dbReference>
<dbReference type="SUPFAM" id="SSF53271">
    <property type="entry name" value="PRTase-like"/>
    <property type="match status" value="1"/>
</dbReference>
<dbReference type="PROSITE" id="PS00103">
    <property type="entry name" value="PUR_PYR_PR_TRANSFER"/>
    <property type="match status" value="1"/>
</dbReference>
<proteinExistence type="inferred from homology"/>
<feature type="chain" id="PRO_1000089010" description="Adenine phosphoribosyltransferase">
    <location>
        <begin position="1"/>
        <end position="170"/>
    </location>
</feature>
<reference key="1">
    <citation type="journal article" date="2010" name="Genome Biol.">
        <title>Structure and dynamics of the pan-genome of Streptococcus pneumoniae and closely related species.</title>
        <authorList>
            <person name="Donati C."/>
            <person name="Hiller N.L."/>
            <person name="Tettelin H."/>
            <person name="Muzzi A."/>
            <person name="Croucher N.J."/>
            <person name="Angiuoli S.V."/>
            <person name="Oggioni M."/>
            <person name="Dunning Hotopp J.C."/>
            <person name="Hu F.Z."/>
            <person name="Riley D.R."/>
            <person name="Covacci A."/>
            <person name="Mitchell T.J."/>
            <person name="Bentley S.D."/>
            <person name="Kilian M."/>
            <person name="Ehrlich G.D."/>
            <person name="Rappuoli R."/>
            <person name="Moxon E.R."/>
            <person name="Masignani V."/>
        </authorList>
    </citation>
    <scope>NUCLEOTIDE SEQUENCE [LARGE SCALE GENOMIC DNA]</scope>
    <source>
        <strain>Hungary19A-6</strain>
    </source>
</reference>